<protein>
    <recommendedName>
        <fullName>Guanine nucleotide-binding protein G(s) subunit alpha isoforms short</fullName>
        <ecNumber evidence="1">3.6.5.-</ecNumber>
    </recommendedName>
    <alternativeName>
        <fullName>Adenylate cyclase-stimulating G alpha protein</fullName>
    </alternativeName>
</protein>
<gene>
    <name type="primary">GNAS</name>
    <name type="synonym">GNAS1</name>
</gene>
<sequence>MGCLGNSKTEDQRNEEKAQREANKKIEKQLQKDKQVYRATHRLLLLGAGESGKSTIVKQMRILHVNGFNGEGGEEDPQAARSNSDGEKATKVQDIKNNLKEAIETIVAAMSNLVPPVELANPENQFRVDYILSVMNVPDFDFPPEFYEHAKALWEDEGVRACYERSNEYQLIDCAQYFLDKIDVIKQDDYVPSDQDLLRCRVLTSGIFETKFQVDKVNFHMFDVGGQRDERRKWIQCFNDVTAIIFVVASSSYNMVIREDNQTNRLQEALNLFKSIWNNRWLRTISVILFLNKQDLLAEKVLAGKSKIEDYFPEFARYTTPEDATPEPGEDPRVTRAKYFIRDEFLRISTASGDGRHYCYPHFTCAVDTENIRRVFNDCRDIIQRMHLRQYELL</sequence>
<reference key="1">
    <citation type="journal article" date="1986" name="FEBS Lett.">
        <title>Primary structure of the alpha-subunit of bovine adenylate cyclase-stimulating G-protein deduced from the cDNA sequence.</title>
        <authorList>
            <person name="Nukada T."/>
            <person name="Tanabe T."/>
            <person name="Takahashi H."/>
            <person name="Noda M."/>
            <person name="Hirose T."/>
            <person name="Inayama S."/>
            <person name="Numa S."/>
        </authorList>
    </citation>
    <scope>NUCLEOTIDE SEQUENCE [MRNA]</scope>
</reference>
<reference key="2">
    <citation type="journal article" date="1986" name="Proc. Natl. Acad. Sci. U.S.A.">
        <title>Deduced primary structure of the alpha subunit of the GTP-binding stimulatory protein of adenylate cyclase.</title>
        <authorList>
            <person name="Robishaw J.D."/>
            <person name="Russell D.W."/>
            <person name="Harris B.A."/>
            <person name="Smigel M.D."/>
            <person name="Gilman A.G."/>
        </authorList>
    </citation>
    <scope>NUCLEOTIDE SEQUENCE [MRNA]</scope>
</reference>
<reference key="3">
    <citation type="submission" date="2006-08" db="EMBL/GenBank/DDBJ databases">
        <authorList>
            <consortium name="NIH - Mammalian Gene Collection (MGC) project"/>
        </authorList>
    </citation>
    <scope>NUCLEOTIDE SEQUENCE [LARGE SCALE MRNA]</scope>
    <source>
        <strain>Hereford</strain>
        <tissue>Hypothalamus</tissue>
        <tissue>Kidney</tissue>
    </source>
</reference>
<reference key="4">
    <citation type="journal article" date="1986" name="J. Biol. Chem.">
        <title>Molecular basis for two forms of the G protein that stimulates adenylate cyclase.</title>
        <authorList>
            <person name="Robishaw J.D."/>
            <person name="Smigel M.D."/>
            <person name="Gilman A.G."/>
        </authorList>
    </citation>
    <scope>NUCLEOTIDE SEQUENCE [MRNA] OF 69-90</scope>
</reference>
<reference key="5">
    <citation type="journal article" date="1991" name="J. Biol. Chem.">
        <title>Expression and characterization of calmodulin-activated (type I) adenylylcyclase.</title>
        <authorList>
            <person name="Tang W.J."/>
            <person name="Krupinski J."/>
            <person name="Gilman A.G."/>
        </authorList>
    </citation>
    <scope>FUNCTION</scope>
</reference>
<reference key="6">
    <citation type="journal article" date="2003" name="EMBO J.">
        <title>Galpha(s) is palmitoylated at the N-terminal glycine.</title>
        <authorList>
            <person name="Kleuss C."/>
            <person name="Krause E."/>
        </authorList>
    </citation>
    <scope>CLEAVAGE OF INITIATOR METHIONINE</scope>
    <scope>PALMITOYLATION AT GLY-2 AND CYS-3</scope>
    <scope>IDENTIFICATION BY MASS SPECTROMETRY</scope>
</reference>
<reference key="7">
    <citation type="journal article" date="1997" name="Science">
        <title>Crystal structure of the adenylyl cyclase activator Gsalpha.</title>
        <authorList>
            <person name="Sunahara R.K."/>
            <person name="Tesmer J.J.G."/>
            <person name="Gilman A.G."/>
            <person name="Sprang S.R."/>
        </authorList>
    </citation>
    <scope>X-RAY CRYSTALLOGRAPHY (2.3 ANGSTROMS) OF ISOFORM GNAS-2 IN COMPLEX WITH GTP ANALOG; MAGNESIUM IONS AND CATALYTIC DOMAINS OF ADCY2 AND ADCY5</scope>
    <scope>MISCELLANEOUS</scope>
    <scope>INTERACTION WITH ADCY2 AND ADCY5</scope>
</reference>
<reference key="8">
    <citation type="journal article" date="1997" name="Science">
        <title>Crystal structure of the catalytic domains of adenylyl cyclase in a complex with Gsalpha.GTPgammaS.</title>
        <authorList>
            <person name="Tesmer J.J.G."/>
            <person name="Sunahara R.K."/>
            <person name="Gilman A.G."/>
            <person name="Sprang S.R."/>
        </authorList>
    </citation>
    <scope>X-RAY CRYSTALLOGRAPHY (2.3 ANGSTROMS) OF COMPLEX WITH GTP ANALOG; MAGNESIUM IONS AND CATALYTIC DOMAINS OF ADCY2 AND ADCY5</scope>
    <scope>MISCELLANEOUS</scope>
    <scope>INTERACTION WITH ADCY2 AND ADCY5</scope>
</reference>
<reference key="9">
    <citation type="journal article" date="1999" name="Science">
        <title>Two-metal-ion catalysis in adenylyl cyclase.</title>
        <authorList>
            <person name="Tesmer J.J.G."/>
            <person name="Sunahara R.K."/>
            <person name="Johnson R.A."/>
            <person name="Gosselin G."/>
            <person name="Gilman A.G."/>
            <person name="Sprang S.R."/>
        </authorList>
    </citation>
    <scope>X-RAY CRYSTALLOGRAPHY (2.8 ANGSTROMS) OF COMPLEX WITH GTP ANALOG; MAGNESIUM IONS AND CATALYTIC DOMAINS OF ADCY2 AND ADCY5</scope>
    <scope>MISCELLANEOUS</scope>
    <scope>INTERACTION WITH ADCY2 AND ADCY5</scope>
</reference>
<reference evidence="22 23" key="10">
    <citation type="journal article" date="2000" name="Biochemistry">
        <title>Molecular basis for P-site inhibition of adenylyl cyclase.</title>
        <authorList>
            <person name="Tesmer J.J."/>
            <person name="Dessauer C.W."/>
            <person name="Sunahara R.K."/>
            <person name="Murray L.D."/>
            <person name="Johnson R.A."/>
            <person name="Gilman A.G."/>
            <person name="Sprang S.R."/>
        </authorList>
    </citation>
    <scope>X-RAY CRYSTALLOGRAPHY (2.40 ANGSTROMS) IN COMPLEX WITH GTP ANALOG; MAGNESIUM IONS AND CATALYTIC DOMAINS OF ADCY2 AND ADCY5</scope>
    <scope>MISCELLANEOUS</scope>
    <scope>INTERACTION WITH ADCY2 AND ADCY5</scope>
    <scope>FUNCTION</scope>
</reference>
<reference evidence="24 25" key="11">
    <citation type="journal article" date="2005" name="J. Biol. Chem.">
        <title>Structural basis for the inhibition of mammalian membrane adenylyl cyclase by 2 '(3')-O-(N-Methylanthraniloyl)-guanosine 5 '-triphosphate.</title>
        <authorList>
            <person name="Mou T.C."/>
            <person name="Gille A."/>
            <person name="Fancy D.A."/>
            <person name="Seifert R."/>
            <person name="Sprang S.R."/>
        </authorList>
    </citation>
    <scope>X-RAY CRYSTALLOGRAPHY (2.80 ANGSTROMS) IN COMPLEX WITH GTP ANALOG; MAGNESIUM IONS AND CATALYTIC DOMAINS OF ADCY2 AND ADCY5</scope>
    <scope>MISCELLANEOUS</scope>
    <scope>INTERACTION WITH ADCY2 AND ADCY5</scope>
    <scope>FUNCTION</scope>
</reference>
<reference evidence="26 27" key="12">
    <citation type="journal article" date="2006" name="Mol. Pharmacol.">
        <title>Broad specificity of mammalian adenylyl cyclase for interaction with 2',3'-substituted purine- and pyrimidine nucleotide inhibitors.</title>
        <authorList>
            <person name="Mou T.C."/>
            <person name="Gille A."/>
            <person name="Suryanarayana S."/>
            <person name="Richter M."/>
            <person name="Seifert R."/>
            <person name="Sprang S.R."/>
        </authorList>
    </citation>
    <scope>X-RAY CRYSTALLOGRAPHY (2.90 ANGSTROMS) IN COMPLEX WITH GTP ANALOG; MANGANESE IONS AND CATALYTIC DOMAINS OF ADCY2 AND ADCY5</scope>
    <scope>MISCELLANEOUS</scope>
    <scope>INTERACTION WITH ADCY2 AND ADCY5</scope>
    <scope>FUNCTION</scope>
</reference>
<reference evidence="28 29 30 31" key="13">
    <citation type="journal article" date="2009" name="Biochemistry">
        <title>Structural basis for inhibition of mammalian adenylyl cyclase by calcium.</title>
        <authorList>
            <person name="Mou T.C."/>
            <person name="Masada N."/>
            <person name="Cooper D.M."/>
            <person name="Sprang S.R."/>
        </authorList>
    </citation>
    <scope>X-RAY CRYSTALLOGRAPHY (2.68 ANGSTROMS) IN COMPLEX WITH GTP ANALOG; MAGNESIUM IONS AND CATALYTIC DOMAINS OF ADCY2 AND ADCY5</scope>
    <scope>MISCELLANEOUS</scope>
    <scope>INTERACTION WITH ADCY2 AND ADCY5</scope>
    <scope>FUNCTION</scope>
</reference>
<comment type="function">
    <text evidence="1 6 11 12 17 18 19">Guanine nucleotide-binding proteins (G proteins) function as transducers in numerous signaling pathways controlled by G protein-coupled receptors (GPCRs) (Probable) (PubMed:11087399, PubMed:2022671, PubMed:9395396). The alpha chain contains the guanine nucleotide binding site and alternates between an active, GTP-bound state and an inactive, GDP-bound state (Probable) (PubMed:11087399, PubMed:2022671, PubMed:9395396). Signaling by an activated GPCR promotes GDP release and GTP binding (Probable) (PubMed:11087399, PubMed:2022671, PubMed:9395396). The alpha subunit has a low GTPase activity that converts bound GTP to GDP, thereby terminating the signal (Probable) (PubMed:11087399, PubMed:2022671, PubMed:9395396). Both GDP release and GTP hydrolysis are modulated by numerous regulatory proteins (Probable) (PubMed:11087399, PubMed:2022671, PubMed:9395396). Signaling involves the activation of adenylyl cyclases, resulting in increased levels of the signaling molecule cAMP (Probable) (PubMed:11087399, PubMed:2022671, PubMed:9395396). Functions downstream of beta-adrenergic receptors (By similarity). Stimulates the Ras signaling pathway via RAPGEF2 (By similarity).</text>
</comment>
<comment type="catalytic activity">
    <reaction evidence="1">
        <text>GTP + H2O = GDP + phosphate + H(+)</text>
        <dbReference type="Rhea" id="RHEA:19669"/>
        <dbReference type="ChEBI" id="CHEBI:15377"/>
        <dbReference type="ChEBI" id="CHEBI:15378"/>
        <dbReference type="ChEBI" id="CHEBI:37565"/>
        <dbReference type="ChEBI" id="CHEBI:43474"/>
        <dbReference type="ChEBI" id="CHEBI:58189"/>
    </reaction>
    <physiologicalReaction direction="left-to-right" evidence="1">
        <dbReference type="Rhea" id="RHEA:19670"/>
    </physiologicalReaction>
</comment>
<comment type="subunit">
    <text evidence="1 5 6 8 9 10 12 13">Heterotrimeric G proteins are composed of 3 units; alpha, beta and gamma. The alpha chain contains the guanine nucleotide binding site (PubMed:10427002, PubMed:11087399, PubMed:15591060, PubMed:16766715, PubMed:19243146, PubMed:9395396, PubMed:9417641). Component of the TAS2R14-GNAS2 complex, consisting of TAS2R14, GNAS2, GNB1 and GNG2; within the complex interacts with TAS2R14; this complex plays a role in the perception of bitterness (By similarity). Interacts with CRY1; the interaction may block GPCR-mediated regulation of cAMP concentrations. Interacts with ADCY6 and stimulates its adenylyl cyclase activity (By similarity). Interacts with ADCY2 and ADCY5 (PubMed:10427002, PubMed:11087399, PubMed:15591060, PubMed:16766715, PubMed:19243146, PubMed:9395396, PubMed:9417641). Stimulates the ADCY5 adenylyl cyclase activity (By similarity). Interacts (GDP-bound form) with RIC8B; promoting GNAS folding and association with the plasma membrane (By similarity). Interaction with SASH1 (By similarity). Interacts with GASL2L2 (By similarity).</text>
</comment>
<comment type="subcellular location">
    <subcellularLocation>
        <location evidence="2">Cell membrane</location>
        <topology evidence="2">Lipid-anchor</topology>
    </subcellularLocation>
</comment>
<comment type="alternative products">
    <event type="alternative splicing"/>
    <isoform>
        <id>P04896-1</id>
        <name>Gnas-1</name>
        <name>Alpha-S2</name>
        <sequence type="displayed"/>
    </isoform>
    <isoform>
        <id>P04896-2</id>
        <name>Gnas-2</name>
        <name>Alpha-S1</name>
        <sequence type="described" ref="VSP_001832"/>
    </isoform>
    <isoform>
        <id>O18979-1</id>
        <name>Nesp55</name>
        <sequence type="external"/>
    </isoform>
</comment>
<comment type="miscellaneous">
    <text>The GNAS locus is imprinted in a complex manner, giving rise to distinct paternally, maternally and biallelically expressed proteins.</text>
</comment>
<comment type="miscellaneous">
    <text evidence="5 6 8 9 10 12 13">Crystal structures were determined for GNAS in complex with an adenylyl cyclase catalytic domain that was reconstructed from ADCY2 and ADCY5 N- and C-terminal domains.</text>
</comment>
<comment type="similarity">
    <text evidence="14">Belongs to the G-alpha family. G(s) subfamily.</text>
</comment>
<feature type="initiator methionine" description="Removed" evidence="7">
    <location>
        <position position="1"/>
    </location>
</feature>
<feature type="chain" id="PRO_0000203717" description="Guanine nucleotide-binding protein G(s) subunit alpha isoforms short">
    <location>
        <begin position="2"/>
        <end position="394"/>
    </location>
</feature>
<feature type="domain" description="G-alpha" evidence="3">
    <location>
        <begin position="39"/>
        <end position="394"/>
    </location>
</feature>
<feature type="region of interest" description="Disordered" evidence="4">
    <location>
        <begin position="1"/>
        <end position="23"/>
    </location>
</feature>
<feature type="region of interest" description="G1 motif" evidence="3">
    <location>
        <begin position="42"/>
        <end position="55"/>
    </location>
</feature>
<feature type="region of interest" description="Disordered" evidence="4">
    <location>
        <begin position="68"/>
        <end position="91"/>
    </location>
</feature>
<feature type="region of interest" description="G2 motif" evidence="3">
    <location>
        <begin position="196"/>
        <end position="204"/>
    </location>
</feature>
<feature type="region of interest" description="G3 motif" evidence="3">
    <location>
        <begin position="219"/>
        <end position="228"/>
    </location>
</feature>
<feature type="region of interest" description="G4 motif" evidence="3">
    <location>
        <begin position="288"/>
        <end position="295"/>
    </location>
</feature>
<feature type="region of interest" description="G5 motif" evidence="3">
    <location>
        <begin position="364"/>
        <end position="369"/>
    </location>
</feature>
<feature type="compositionally biased region" description="Basic and acidic residues" evidence="4">
    <location>
        <begin position="8"/>
        <end position="23"/>
    </location>
</feature>
<feature type="binding site" evidence="15 16 17 18 19 20 21">
    <location>
        <begin position="47"/>
        <end position="55"/>
    </location>
    <ligand>
        <name>GTP</name>
        <dbReference type="ChEBI" id="CHEBI:37565"/>
    </ligand>
</feature>
<feature type="binding site" evidence="5 6 8 10 12 13 18">
    <location>
        <position position="54"/>
    </location>
    <ligand>
        <name>Mg(2+)</name>
        <dbReference type="ChEBI" id="CHEBI:18420"/>
    </ligand>
</feature>
<feature type="binding site" evidence="15 16 17 18 19 20 21">
    <location>
        <begin position="197"/>
        <end position="204"/>
    </location>
    <ligand>
        <name>GTP</name>
        <dbReference type="ChEBI" id="CHEBI:37565"/>
    </ligand>
</feature>
<feature type="binding site" evidence="5 6 8 10 12 13 18">
    <location>
        <position position="204"/>
    </location>
    <ligand>
        <name>Mg(2+)</name>
        <dbReference type="ChEBI" id="CHEBI:18420"/>
    </ligand>
</feature>
<feature type="binding site" evidence="15 16 17 18 19 20 21">
    <location>
        <begin position="223"/>
        <end position="227"/>
    </location>
    <ligand>
        <name>GTP</name>
        <dbReference type="ChEBI" id="CHEBI:37565"/>
    </ligand>
</feature>
<feature type="binding site" evidence="15 16 17 18 19 20 21">
    <location>
        <begin position="292"/>
        <end position="295"/>
    </location>
    <ligand>
        <name>GTP</name>
        <dbReference type="ChEBI" id="CHEBI:37565"/>
    </ligand>
</feature>
<feature type="binding site" evidence="15 16 17 18 19 20 21">
    <location>
        <position position="366"/>
    </location>
    <ligand>
        <name>GTP</name>
        <dbReference type="ChEBI" id="CHEBI:37565"/>
    </ligand>
</feature>
<feature type="modified residue" description="Phosphoserine" evidence="1">
    <location>
        <position position="352"/>
    </location>
</feature>
<feature type="lipid moiety-binding region" description="N-palmitoyl glycine" evidence="7">
    <location>
        <position position="2"/>
    </location>
</feature>
<feature type="lipid moiety-binding region" description="S-palmitoyl cysteine" evidence="7">
    <location>
        <position position="3"/>
    </location>
</feature>
<feature type="cross-link" description="Glycyl lysine isopeptide (Lys-Gly) (interchain with G-Cter in ubiquitin)" evidence="1">
    <location>
        <position position="300"/>
    </location>
</feature>
<feature type="splice variant" id="VSP_001832" description="In isoform Gnas-2." evidence="14">
    <location>
        <begin position="71"/>
        <end position="84"/>
    </location>
</feature>
<feature type="sequence conflict" description="In Ref. 2; AAA30560." evidence="14" ref="2">
    <original>A</original>
    <variation>G</variation>
    <location>
        <position position="18"/>
    </location>
</feature>
<feature type="sequence conflict" description="In Ref. 2; AAA30560." evidence="14" ref="2">
    <original>D</original>
    <variation>S</variation>
    <location>
        <position position="85"/>
    </location>
</feature>
<feature type="sequence conflict" description="In Ref. 2; AAA30560." evidence="14" ref="2">
    <original>F</original>
    <variation>S</variation>
    <location>
        <position position="363"/>
    </location>
</feature>
<feature type="helix" evidence="33">
    <location>
        <begin position="36"/>
        <end position="39"/>
    </location>
</feature>
<feature type="strand" evidence="32">
    <location>
        <begin position="40"/>
        <end position="48"/>
    </location>
</feature>
<feature type="strand" evidence="41">
    <location>
        <begin position="49"/>
        <end position="51"/>
    </location>
</feature>
<feature type="helix" evidence="32">
    <location>
        <begin position="53"/>
        <end position="64"/>
    </location>
</feature>
<feature type="helix" evidence="35">
    <location>
        <begin position="87"/>
        <end position="89"/>
    </location>
</feature>
<feature type="helix" evidence="32">
    <location>
        <begin position="90"/>
        <end position="112"/>
    </location>
</feature>
<feature type="strand" evidence="32">
    <location>
        <begin position="113"/>
        <end position="115"/>
    </location>
</feature>
<feature type="helix" evidence="32">
    <location>
        <begin position="122"/>
        <end position="124"/>
    </location>
</feature>
<feature type="helix" evidence="32">
    <location>
        <begin position="125"/>
        <end position="133"/>
    </location>
</feature>
<feature type="turn" evidence="32">
    <location>
        <begin position="134"/>
        <end position="136"/>
    </location>
</feature>
<feature type="strand" evidence="40">
    <location>
        <begin position="137"/>
        <end position="139"/>
    </location>
</feature>
<feature type="helix" evidence="32">
    <location>
        <begin position="144"/>
        <end position="155"/>
    </location>
</feature>
<feature type="helix" evidence="32">
    <location>
        <begin position="157"/>
        <end position="163"/>
    </location>
</feature>
<feature type="helix" evidence="32">
    <location>
        <begin position="164"/>
        <end position="168"/>
    </location>
</feature>
<feature type="helix" evidence="32">
    <location>
        <begin position="175"/>
        <end position="179"/>
    </location>
</feature>
<feature type="helix" evidence="32">
    <location>
        <begin position="182"/>
        <end position="185"/>
    </location>
</feature>
<feature type="strand" evidence="37">
    <location>
        <begin position="186"/>
        <end position="189"/>
    </location>
</feature>
<feature type="helix" evidence="32">
    <location>
        <begin position="194"/>
        <end position="199"/>
    </location>
</feature>
<feature type="strand" evidence="32">
    <location>
        <begin position="206"/>
        <end position="214"/>
    </location>
</feature>
<feature type="strand" evidence="32">
    <location>
        <begin position="217"/>
        <end position="224"/>
    </location>
</feature>
<feature type="helix" evidence="32">
    <location>
        <begin position="228"/>
        <end position="237"/>
    </location>
</feature>
<feature type="turn" evidence="32">
    <location>
        <begin position="238"/>
        <end position="240"/>
    </location>
</feature>
<feature type="strand" evidence="32">
    <location>
        <begin position="243"/>
        <end position="249"/>
    </location>
</feature>
<feature type="helix" evidence="32">
    <location>
        <begin position="252"/>
        <end position="254"/>
    </location>
</feature>
<feature type="turn" evidence="32">
    <location>
        <begin position="258"/>
        <end position="260"/>
    </location>
</feature>
<feature type="strand" evidence="35">
    <location>
        <begin position="261"/>
        <end position="264"/>
    </location>
</feature>
<feature type="helix" evidence="32">
    <location>
        <begin position="265"/>
        <end position="277"/>
    </location>
</feature>
<feature type="helix" evidence="33">
    <location>
        <begin position="280"/>
        <end position="282"/>
    </location>
</feature>
<feature type="strand" evidence="34">
    <location>
        <begin position="283"/>
        <end position="285"/>
    </location>
</feature>
<feature type="strand" evidence="32">
    <location>
        <begin position="287"/>
        <end position="292"/>
    </location>
</feature>
<feature type="helix" evidence="32">
    <location>
        <begin position="294"/>
        <end position="303"/>
    </location>
</feature>
<feature type="helix" evidence="32">
    <location>
        <begin position="308"/>
        <end position="310"/>
    </location>
</feature>
<feature type="helix" evidence="32">
    <location>
        <begin position="313"/>
        <end position="316"/>
    </location>
</feature>
<feature type="strand" evidence="36">
    <location>
        <begin position="322"/>
        <end position="324"/>
    </location>
</feature>
<feature type="helix" evidence="32">
    <location>
        <begin position="332"/>
        <end position="350"/>
    </location>
</feature>
<feature type="turn" evidence="38">
    <location>
        <begin position="354"/>
        <end position="356"/>
    </location>
</feature>
<feature type="strand" evidence="32">
    <location>
        <begin position="359"/>
        <end position="363"/>
    </location>
</feature>
<feature type="strand" evidence="39">
    <location>
        <begin position="366"/>
        <end position="368"/>
    </location>
</feature>
<feature type="helix" evidence="32">
    <location>
        <begin position="369"/>
        <end position="392"/>
    </location>
</feature>
<organism>
    <name type="scientific">Bos taurus</name>
    <name type="common">Bovine</name>
    <dbReference type="NCBI Taxonomy" id="9913"/>
    <lineage>
        <taxon>Eukaryota</taxon>
        <taxon>Metazoa</taxon>
        <taxon>Chordata</taxon>
        <taxon>Craniata</taxon>
        <taxon>Vertebrata</taxon>
        <taxon>Euteleostomi</taxon>
        <taxon>Mammalia</taxon>
        <taxon>Eutheria</taxon>
        <taxon>Laurasiatheria</taxon>
        <taxon>Artiodactyla</taxon>
        <taxon>Ruminantia</taxon>
        <taxon>Pecora</taxon>
        <taxon>Bovidae</taxon>
        <taxon>Bovinae</taxon>
        <taxon>Bos</taxon>
    </lineage>
</organism>
<keyword id="KW-0002">3D-structure</keyword>
<keyword id="KW-0025">Alternative splicing</keyword>
<keyword id="KW-1003">Cell membrane</keyword>
<keyword id="KW-0342">GTP-binding</keyword>
<keyword id="KW-0378">Hydrolase</keyword>
<keyword id="KW-1017">Isopeptide bond</keyword>
<keyword id="KW-0449">Lipoprotein</keyword>
<keyword id="KW-0460">Magnesium</keyword>
<keyword id="KW-0472">Membrane</keyword>
<keyword id="KW-0479">Metal-binding</keyword>
<keyword id="KW-0547">Nucleotide-binding</keyword>
<keyword id="KW-0564">Palmitate</keyword>
<keyword id="KW-0597">Phosphoprotein</keyword>
<keyword id="KW-1185">Reference proteome</keyword>
<keyword id="KW-0807">Transducer</keyword>
<keyword id="KW-0832">Ubl conjugation</keyword>
<accession>P04896</accession>
<accession>Q0II85</accession>
<accession>Q3SZE7</accession>
<proteinExistence type="evidence at protein level"/>
<name>GNAS2_BOVIN</name>
<evidence type="ECO:0000250" key="1">
    <source>
        <dbReference type="UniProtKB" id="P63092"/>
    </source>
</evidence>
<evidence type="ECO:0000250" key="2">
    <source>
        <dbReference type="UniProtKB" id="P63094"/>
    </source>
</evidence>
<evidence type="ECO:0000255" key="3">
    <source>
        <dbReference type="PROSITE-ProRule" id="PRU01230"/>
    </source>
</evidence>
<evidence type="ECO:0000256" key="4">
    <source>
        <dbReference type="SAM" id="MobiDB-lite"/>
    </source>
</evidence>
<evidence type="ECO:0000269" key="5">
    <source>
    </source>
</evidence>
<evidence type="ECO:0000269" key="6">
    <source>
    </source>
</evidence>
<evidence type="ECO:0000269" key="7">
    <source>
    </source>
</evidence>
<evidence type="ECO:0000269" key="8">
    <source>
    </source>
</evidence>
<evidence type="ECO:0000269" key="9">
    <source>
    </source>
</evidence>
<evidence type="ECO:0000269" key="10">
    <source>
    </source>
</evidence>
<evidence type="ECO:0000269" key="11">
    <source>
    </source>
</evidence>
<evidence type="ECO:0000269" key="12">
    <source>
    </source>
</evidence>
<evidence type="ECO:0000269" key="13">
    <source>
    </source>
</evidence>
<evidence type="ECO:0000305" key="14"/>
<evidence type="ECO:0000305" key="15">
    <source>
    </source>
</evidence>
<evidence type="ECO:0000305" key="16">
    <source>
    </source>
</evidence>
<evidence type="ECO:0000305" key="17">
    <source>
    </source>
</evidence>
<evidence type="ECO:0000305" key="18">
    <source>
    </source>
</evidence>
<evidence type="ECO:0000305" key="19">
    <source>
    </source>
</evidence>
<evidence type="ECO:0000305" key="20">
    <source>
    </source>
</evidence>
<evidence type="ECO:0000305" key="21">
    <source>
    </source>
</evidence>
<evidence type="ECO:0007744" key="22">
    <source>
        <dbReference type="PDB" id="1CS4"/>
    </source>
</evidence>
<evidence type="ECO:0007744" key="23">
    <source>
        <dbReference type="PDB" id="1CUL"/>
    </source>
</evidence>
<evidence type="ECO:0007744" key="24">
    <source>
        <dbReference type="PDB" id="1TL7"/>
    </source>
</evidence>
<evidence type="ECO:0007744" key="25">
    <source>
        <dbReference type="PDB" id="1U0H"/>
    </source>
</evidence>
<evidence type="ECO:0007744" key="26">
    <source>
        <dbReference type="PDB" id="2GVD"/>
    </source>
</evidence>
<evidence type="ECO:0007744" key="27">
    <source>
        <dbReference type="PDB" id="2GVZ"/>
    </source>
</evidence>
<evidence type="ECO:0007744" key="28">
    <source>
        <dbReference type="PDB" id="3C14"/>
    </source>
</evidence>
<evidence type="ECO:0007744" key="29">
    <source>
        <dbReference type="PDB" id="3C15"/>
    </source>
</evidence>
<evidence type="ECO:0007744" key="30">
    <source>
        <dbReference type="PDB" id="3C16"/>
    </source>
</evidence>
<evidence type="ECO:0007744" key="31">
    <source>
        <dbReference type="PDB" id="3MAA"/>
    </source>
</evidence>
<evidence type="ECO:0007829" key="32">
    <source>
        <dbReference type="PDB" id="1AZS"/>
    </source>
</evidence>
<evidence type="ECO:0007829" key="33">
    <source>
        <dbReference type="PDB" id="1AZT"/>
    </source>
</evidence>
<evidence type="ECO:0007829" key="34">
    <source>
        <dbReference type="PDB" id="1U0H"/>
    </source>
</evidence>
<evidence type="ECO:0007829" key="35">
    <source>
        <dbReference type="PDB" id="2GVZ"/>
    </source>
</evidence>
<evidence type="ECO:0007829" key="36">
    <source>
        <dbReference type="PDB" id="6NBF"/>
    </source>
</evidence>
<evidence type="ECO:0007829" key="37">
    <source>
        <dbReference type="PDB" id="6R4P"/>
    </source>
</evidence>
<evidence type="ECO:0007829" key="38">
    <source>
        <dbReference type="PDB" id="7JJO"/>
    </source>
</evidence>
<evidence type="ECO:0007829" key="39">
    <source>
        <dbReference type="PDB" id="7VQX"/>
    </source>
</evidence>
<evidence type="ECO:0007829" key="40">
    <source>
        <dbReference type="PDB" id="8BUZ"/>
    </source>
</evidence>
<evidence type="ECO:0007829" key="41">
    <source>
        <dbReference type="PDB" id="9IJE"/>
    </source>
</evidence>
<dbReference type="EC" id="3.6.5.-" evidence="1"/>
<dbReference type="EMBL" id="X03404">
    <property type="protein sequence ID" value="CAA27137.1"/>
    <property type="molecule type" value="mRNA"/>
</dbReference>
<dbReference type="EMBL" id="M13006">
    <property type="protein sequence ID" value="AAA30560.1"/>
    <property type="molecule type" value="mRNA"/>
</dbReference>
<dbReference type="EMBL" id="BC102905">
    <property type="protein sequence ID" value="AAI02906.1"/>
    <property type="molecule type" value="mRNA"/>
</dbReference>
<dbReference type="EMBL" id="BC122757">
    <property type="protein sequence ID" value="AAI22758.1"/>
    <property type="molecule type" value="mRNA"/>
</dbReference>
<dbReference type="EMBL" id="M14014">
    <property type="protein sequence ID" value="AAA30557.1"/>
    <property type="molecule type" value="mRNA"/>
</dbReference>
<dbReference type="PIR" id="A23818">
    <property type="entry name" value="RGBOGA"/>
</dbReference>
<dbReference type="PIR" id="I45904">
    <property type="entry name" value="I45904"/>
</dbReference>
<dbReference type="RefSeq" id="NP_001258700.1">
    <property type="nucleotide sequence ID" value="NM_001271771.1"/>
</dbReference>
<dbReference type="RefSeq" id="NP_851364.1">
    <molecule id="P04896-1"/>
    <property type="nucleotide sequence ID" value="NM_181021.3"/>
</dbReference>
<dbReference type="PDB" id="1AZS">
    <property type="method" value="X-ray"/>
    <property type="resolution" value="2.30 A"/>
    <property type="chains" value="C=1-394"/>
</dbReference>
<dbReference type="PDB" id="1AZT">
    <property type="method" value="X-ray"/>
    <property type="resolution" value="2.30 A"/>
    <property type="chains" value="A/B=1-394"/>
</dbReference>
<dbReference type="PDB" id="1CJK">
    <property type="method" value="X-ray"/>
    <property type="resolution" value="3.00 A"/>
    <property type="chains" value="C=1-394"/>
</dbReference>
<dbReference type="PDB" id="1CJT">
    <property type="method" value="X-ray"/>
    <property type="resolution" value="2.80 A"/>
    <property type="chains" value="C=1-394"/>
</dbReference>
<dbReference type="PDB" id="1CJU">
    <property type="method" value="X-ray"/>
    <property type="resolution" value="2.80 A"/>
    <property type="chains" value="C=1-394"/>
</dbReference>
<dbReference type="PDB" id="1CJV">
    <property type="method" value="X-ray"/>
    <property type="resolution" value="3.00 A"/>
    <property type="chains" value="C=1-394"/>
</dbReference>
<dbReference type="PDB" id="1CS4">
    <property type="method" value="X-ray"/>
    <property type="resolution" value="2.50 A"/>
    <property type="chains" value="C=1-394"/>
</dbReference>
<dbReference type="PDB" id="1CUL">
    <property type="method" value="X-ray"/>
    <property type="resolution" value="2.40 A"/>
    <property type="chains" value="C=1-394"/>
</dbReference>
<dbReference type="PDB" id="1TL7">
    <property type="method" value="X-ray"/>
    <property type="resolution" value="2.80 A"/>
    <property type="chains" value="C=1-394"/>
</dbReference>
<dbReference type="PDB" id="1U0H">
    <property type="method" value="X-ray"/>
    <property type="resolution" value="2.90 A"/>
    <property type="chains" value="C=1-394"/>
</dbReference>
<dbReference type="PDB" id="2GVD">
    <property type="method" value="X-ray"/>
    <property type="resolution" value="2.90 A"/>
    <property type="chains" value="C=1-394"/>
</dbReference>
<dbReference type="PDB" id="2GVZ">
    <property type="method" value="X-ray"/>
    <property type="resolution" value="3.27 A"/>
    <property type="chains" value="C=1-394"/>
</dbReference>
<dbReference type="PDB" id="3C14">
    <property type="method" value="X-ray"/>
    <property type="resolution" value="2.68 A"/>
    <property type="chains" value="C=1-394"/>
</dbReference>
<dbReference type="PDB" id="3C15">
    <property type="method" value="X-ray"/>
    <property type="resolution" value="2.78 A"/>
    <property type="chains" value="C=1-394"/>
</dbReference>
<dbReference type="PDB" id="3C16">
    <property type="method" value="X-ray"/>
    <property type="resolution" value="2.87 A"/>
    <property type="chains" value="C=1-394"/>
</dbReference>
<dbReference type="PDB" id="3G82">
    <property type="method" value="X-ray"/>
    <property type="resolution" value="3.11 A"/>
    <property type="chains" value="C=1-394"/>
</dbReference>
<dbReference type="PDB" id="3MAA">
    <property type="method" value="X-ray"/>
    <property type="resolution" value="3.00 A"/>
    <property type="chains" value="C=1-394"/>
</dbReference>
<dbReference type="PDB" id="3SN6">
    <property type="method" value="X-ray"/>
    <property type="resolution" value="3.20 A"/>
    <property type="chains" value="A=1-394"/>
</dbReference>
<dbReference type="PDB" id="6NBF">
    <property type="method" value="EM"/>
    <property type="resolution" value="3.00 A"/>
    <property type="chains" value="A=1-67, A=208-394"/>
</dbReference>
<dbReference type="PDB" id="6NBH">
    <property type="method" value="EM"/>
    <property type="resolution" value="3.50 A"/>
    <property type="chains" value="A=1-67, A=208-394"/>
</dbReference>
<dbReference type="PDB" id="6NBI">
    <property type="method" value="EM"/>
    <property type="resolution" value="4.00 A"/>
    <property type="chains" value="A=1-67, A=208-394"/>
</dbReference>
<dbReference type="PDB" id="6R3Q">
    <property type="method" value="EM"/>
    <property type="resolution" value="3.40 A"/>
    <property type="chains" value="B=1-394"/>
</dbReference>
<dbReference type="PDB" id="6R4O">
    <property type="method" value="EM"/>
    <property type="resolution" value="4.20 A"/>
    <property type="chains" value="B=1-394"/>
</dbReference>
<dbReference type="PDB" id="6R4P">
    <property type="method" value="EM"/>
    <property type="resolution" value="3.10 A"/>
    <property type="chains" value="B=1-394"/>
</dbReference>
<dbReference type="PDB" id="7D68">
    <property type="method" value="EM"/>
    <property type="resolution" value="3.00 A"/>
    <property type="chains" value="A=1-67, A=208-394"/>
</dbReference>
<dbReference type="PDB" id="7DTY">
    <property type="method" value="EM"/>
    <property type="resolution" value="2.98 A"/>
    <property type="chains" value="A=1-394"/>
</dbReference>
<dbReference type="PDB" id="7EQ1">
    <property type="method" value="EM"/>
    <property type="resolution" value="3.30 A"/>
    <property type="chains" value="A=27-67, A=205-251, A=266-394"/>
</dbReference>
<dbReference type="PDB" id="7FIM">
    <property type="method" value="EM"/>
    <property type="resolution" value="3.40 A"/>
    <property type="chains" value="A=1-394"/>
</dbReference>
<dbReference type="PDB" id="7FIN">
    <property type="method" value="EM"/>
    <property type="resolution" value="3.10 A"/>
    <property type="chains" value="A=1-394"/>
</dbReference>
<dbReference type="PDB" id="7FIY">
    <property type="method" value="EM"/>
    <property type="resolution" value="3.40 A"/>
    <property type="chains" value="A=1-394"/>
</dbReference>
<dbReference type="PDB" id="7JJO">
    <property type="method" value="EM"/>
    <property type="resolution" value="2.60 A"/>
    <property type="chains" value="A=1-394"/>
</dbReference>
<dbReference type="PDB" id="7PDE">
    <property type="method" value="EM"/>
    <property type="resolution" value="4.50 A"/>
    <property type="chains" value="B=1-394"/>
</dbReference>
<dbReference type="PDB" id="7PDF">
    <property type="method" value="EM"/>
    <property type="resolution" value="3.80 A"/>
    <property type="chains" value="B=1-394"/>
</dbReference>
<dbReference type="PDB" id="7S0G">
    <property type="method" value="EM"/>
    <property type="resolution" value="3.86 A"/>
    <property type="chains" value="A=384-394"/>
</dbReference>
<dbReference type="PDB" id="7VQX">
    <property type="method" value="EM"/>
    <property type="resolution" value="2.74 A"/>
    <property type="chains" value="A=1-394"/>
</dbReference>
<dbReference type="PDB" id="7WBJ">
    <property type="method" value="EM"/>
    <property type="resolution" value="3.42 A"/>
    <property type="chains" value="A=1-394"/>
</dbReference>
<dbReference type="PDB" id="8BUZ">
    <property type="method" value="EM"/>
    <property type="resolution" value="3.50 A"/>
    <property type="chains" value="B=1-394"/>
</dbReference>
<dbReference type="PDB" id="8BV5">
    <property type="method" value="EM"/>
    <property type="resolution" value="3.54 A"/>
    <property type="chains" value="B=1-394"/>
</dbReference>
<dbReference type="PDB" id="8DCR">
    <property type="method" value="EM"/>
    <property type="resolution" value="2.60 A"/>
    <property type="chains" value="A=1-394"/>
</dbReference>
<dbReference type="PDB" id="8DCS">
    <property type="method" value="EM"/>
    <property type="resolution" value="2.50 A"/>
    <property type="chains" value="A=1-394"/>
</dbReference>
<dbReference type="PDB" id="8ITL">
    <property type="method" value="EM"/>
    <property type="resolution" value="3.23 A"/>
    <property type="chains" value="A=1-394"/>
</dbReference>
<dbReference type="PDB" id="8ITM">
    <property type="method" value="EM"/>
    <property type="resolution" value="3.13 A"/>
    <property type="chains" value="A=1-394"/>
</dbReference>
<dbReference type="PDB" id="8WA3">
    <property type="method" value="EM"/>
    <property type="resolution" value="2.86 A"/>
    <property type="chains" value="A=1-394"/>
</dbReference>
<dbReference type="PDB" id="9IJD">
    <property type="method" value="EM"/>
    <property type="resolution" value="2.76 A"/>
    <property type="chains" value="A=26-394"/>
</dbReference>
<dbReference type="PDB" id="9IJE">
    <property type="method" value="EM"/>
    <property type="resolution" value="2.34 A"/>
    <property type="chains" value="A=26-394"/>
</dbReference>
<dbReference type="PDBsum" id="1AZS"/>
<dbReference type="PDBsum" id="1AZT"/>
<dbReference type="PDBsum" id="1CJK"/>
<dbReference type="PDBsum" id="1CJT"/>
<dbReference type="PDBsum" id="1CJU"/>
<dbReference type="PDBsum" id="1CJV"/>
<dbReference type="PDBsum" id="1CS4"/>
<dbReference type="PDBsum" id="1CUL"/>
<dbReference type="PDBsum" id="1TL7"/>
<dbReference type="PDBsum" id="1U0H"/>
<dbReference type="PDBsum" id="2GVD"/>
<dbReference type="PDBsum" id="2GVZ"/>
<dbReference type="PDBsum" id="3C14"/>
<dbReference type="PDBsum" id="3C15"/>
<dbReference type="PDBsum" id="3C16"/>
<dbReference type="PDBsum" id="3G82"/>
<dbReference type="PDBsum" id="3MAA"/>
<dbReference type="PDBsum" id="3SN6"/>
<dbReference type="PDBsum" id="6NBF"/>
<dbReference type="PDBsum" id="6NBH"/>
<dbReference type="PDBsum" id="6NBI"/>
<dbReference type="PDBsum" id="6R3Q"/>
<dbReference type="PDBsum" id="6R4O"/>
<dbReference type="PDBsum" id="6R4P"/>
<dbReference type="PDBsum" id="7D68"/>
<dbReference type="PDBsum" id="7DTY"/>
<dbReference type="PDBsum" id="7EQ1"/>
<dbReference type="PDBsum" id="7FIM"/>
<dbReference type="PDBsum" id="7FIN"/>
<dbReference type="PDBsum" id="7FIY"/>
<dbReference type="PDBsum" id="7JJO"/>
<dbReference type="PDBsum" id="7PDE"/>
<dbReference type="PDBsum" id="7PDF"/>
<dbReference type="PDBsum" id="7S0G"/>
<dbReference type="PDBsum" id="7VQX"/>
<dbReference type="PDBsum" id="7WBJ"/>
<dbReference type="PDBsum" id="8BUZ"/>
<dbReference type="PDBsum" id="8BV5"/>
<dbReference type="PDBsum" id="8DCR"/>
<dbReference type="PDBsum" id="8DCS"/>
<dbReference type="PDBsum" id="8ITL"/>
<dbReference type="PDBsum" id="8ITM"/>
<dbReference type="PDBsum" id="8WA3"/>
<dbReference type="PDBsum" id="9IJD"/>
<dbReference type="PDBsum" id="9IJE"/>
<dbReference type="EMDB" id="EMD-0410"/>
<dbReference type="EMDB" id="EMD-0411"/>
<dbReference type="EMDB" id="EMD-0412"/>
<dbReference type="EMDB" id="EMD-13335"/>
<dbReference type="EMDB" id="EMD-13336"/>
<dbReference type="EMDB" id="EMD-16249"/>
<dbReference type="EMDB" id="EMD-16252"/>
<dbReference type="EMDB" id="EMD-16253"/>
<dbReference type="EMDB" id="EMD-16255"/>
<dbReference type="EMDB" id="EMD-22357"/>
<dbReference type="EMDB" id="EMD-24790"/>
<dbReference type="EMDB" id="EMD-27328"/>
<dbReference type="EMDB" id="EMD-27329"/>
<dbReference type="EMDB" id="EMD-30590"/>
<dbReference type="EMDB" id="EMD-30860"/>
<dbReference type="EMDB" id="EMD-31254"/>
<dbReference type="EMDB" id="EMD-31603"/>
<dbReference type="EMDB" id="EMD-31604"/>
<dbReference type="EMDB" id="EMD-31606"/>
<dbReference type="EMDB" id="EMD-32095"/>
<dbReference type="EMDB" id="EMD-32401"/>
<dbReference type="EMDB" id="EMD-35706"/>
<dbReference type="EMDB" id="EMD-35707"/>
<dbReference type="EMDB" id="EMD-37390"/>
<dbReference type="EMDB" id="EMD-38183"/>
<dbReference type="EMDB" id="EMD-38184"/>
<dbReference type="EMDB" id="EMD-38185"/>
<dbReference type="EMDB" id="EMD-4719"/>
<dbReference type="EMDB" id="EMD-4721"/>
<dbReference type="EMDB" id="EMD-4722"/>
<dbReference type="EMDB" id="EMD-60628"/>
<dbReference type="EMDB" id="EMD-60629"/>
<dbReference type="SMR" id="P04896"/>
<dbReference type="CORUM" id="P04896"/>
<dbReference type="DIP" id="DIP-588N"/>
<dbReference type="FunCoup" id="P04896">
    <property type="interactions" value="605"/>
</dbReference>
<dbReference type="IntAct" id="P04896">
    <property type="interactions" value="4"/>
</dbReference>
<dbReference type="STRING" id="9913.ENSBTAP00000072381"/>
<dbReference type="SwissPalm" id="P04896"/>
<dbReference type="PaxDb" id="9913-ENSBTAP00000023246"/>
<dbReference type="ABCD" id="P04896">
    <property type="antibodies" value="3 sequenced antibodies"/>
</dbReference>
<dbReference type="GeneID" id="281793"/>
<dbReference type="KEGG" id="bta:281793"/>
<dbReference type="CTD" id="2778"/>
<dbReference type="VEuPathDB" id="HostDB:ENSBTAG00000052413"/>
<dbReference type="eggNOG" id="KOG0099">
    <property type="taxonomic scope" value="Eukaryota"/>
</dbReference>
<dbReference type="HOGENOM" id="CLU_014184_3_0_1"/>
<dbReference type="InParanoid" id="P04896"/>
<dbReference type="OMA" id="DHVAKCW"/>
<dbReference type="OrthoDB" id="5817230at2759"/>
<dbReference type="BRENDA" id="3.6.5.1">
    <property type="organism ID" value="908"/>
</dbReference>
<dbReference type="EvolutionaryTrace" id="P04896"/>
<dbReference type="Proteomes" id="UP000009136">
    <property type="component" value="Chromosome 13"/>
</dbReference>
<dbReference type="Bgee" id="ENSBTAG00000052413">
    <property type="expression patterns" value="Expressed in neurohypophysis and 104 other cell types or tissues"/>
</dbReference>
<dbReference type="GO" id="GO:0005737">
    <property type="term" value="C:cytoplasm"/>
    <property type="evidence" value="ECO:0000318"/>
    <property type="project" value="GO_Central"/>
</dbReference>
<dbReference type="GO" id="GO:0005834">
    <property type="term" value="C:heterotrimeric G-protein complex"/>
    <property type="evidence" value="ECO:0000318"/>
    <property type="project" value="GO_Central"/>
</dbReference>
<dbReference type="GO" id="GO:0010856">
    <property type="term" value="F:adenylate cyclase activator activity"/>
    <property type="evidence" value="ECO:0000250"/>
    <property type="project" value="UniProtKB"/>
</dbReference>
<dbReference type="GO" id="GO:0031698">
    <property type="term" value="F:beta-2 adrenergic receptor binding"/>
    <property type="evidence" value="ECO:0000318"/>
    <property type="project" value="GO_Central"/>
</dbReference>
<dbReference type="GO" id="GO:0051430">
    <property type="term" value="F:corticotropin-releasing hormone receptor 1 binding"/>
    <property type="evidence" value="ECO:0000318"/>
    <property type="project" value="GO_Central"/>
</dbReference>
<dbReference type="GO" id="GO:0031748">
    <property type="term" value="F:D1 dopamine receptor binding"/>
    <property type="evidence" value="ECO:0000318"/>
    <property type="project" value="GO_Central"/>
</dbReference>
<dbReference type="GO" id="GO:0031683">
    <property type="term" value="F:G-protein beta/gamma-subunit complex binding"/>
    <property type="evidence" value="ECO:0000318"/>
    <property type="project" value="GO_Central"/>
</dbReference>
<dbReference type="GO" id="GO:0005525">
    <property type="term" value="F:GTP binding"/>
    <property type="evidence" value="ECO:0007669"/>
    <property type="project" value="UniProtKB-KW"/>
</dbReference>
<dbReference type="GO" id="GO:0003924">
    <property type="term" value="F:GTPase activity"/>
    <property type="evidence" value="ECO:0000318"/>
    <property type="project" value="GO_Central"/>
</dbReference>
<dbReference type="GO" id="GO:0005159">
    <property type="term" value="F:insulin-like growth factor receptor binding"/>
    <property type="evidence" value="ECO:0000318"/>
    <property type="project" value="GO_Central"/>
</dbReference>
<dbReference type="GO" id="GO:0035255">
    <property type="term" value="F:ionotropic glutamate receptor binding"/>
    <property type="evidence" value="ECO:0000318"/>
    <property type="project" value="GO_Central"/>
</dbReference>
<dbReference type="GO" id="GO:0046872">
    <property type="term" value="F:metal ion binding"/>
    <property type="evidence" value="ECO:0007669"/>
    <property type="project" value="UniProtKB-KW"/>
</dbReference>
<dbReference type="GO" id="GO:0031852">
    <property type="term" value="F:mu-type opioid receptor binding"/>
    <property type="evidence" value="ECO:0000318"/>
    <property type="project" value="GO_Central"/>
</dbReference>
<dbReference type="GO" id="GO:0071880">
    <property type="term" value="P:adenylate cyclase-activating adrenergic receptor signaling pathway"/>
    <property type="evidence" value="ECO:0000250"/>
    <property type="project" value="UniProtKB"/>
</dbReference>
<dbReference type="GO" id="GO:0007191">
    <property type="term" value="P:adenylate cyclase-activating dopamine receptor signaling pathway"/>
    <property type="evidence" value="ECO:0000318"/>
    <property type="project" value="GO_Central"/>
</dbReference>
<dbReference type="GO" id="GO:0007189">
    <property type="term" value="P:adenylate cyclase-activating G protein-coupled receptor signaling pathway"/>
    <property type="evidence" value="ECO:0000250"/>
    <property type="project" value="UniProtKB"/>
</dbReference>
<dbReference type="GO" id="GO:0007606">
    <property type="term" value="P:sensory perception of chemical stimulus"/>
    <property type="evidence" value="ECO:0000318"/>
    <property type="project" value="GO_Central"/>
</dbReference>
<dbReference type="CDD" id="cd00066">
    <property type="entry name" value="G-alpha"/>
    <property type="match status" value="1"/>
</dbReference>
<dbReference type="FunFam" id="1.10.400.10:FF:000003">
    <property type="entry name" value="Guanine nucleotide-binding protein G(S) subunit alpha"/>
    <property type="match status" value="1"/>
</dbReference>
<dbReference type="FunFam" id="3.40.50.300:FF:006178">
    <property type="entry name" value="Guanine nucleotide-binding protein G(s) subunit alpha isoforms short"/>
    <property type="match status" value="2"/>
</dbReference>
<dbReference type="Gene3D" id="1.10.400.10">
    <property type="entry name" value="GI Alpha 1, domain 2-like"/>
    <property type="match status" value="1"/>
</dbReference>
<dbReference type="Gene3D" id="3.40.50.300">
    <property type="entry name" value="P-loop containing nucleotide triphosphate hydrolases"/>
    <property type="match status" value="1"/>
</dbReference>
<dbReference type="InterPro" id="IPR000367">
    <property type="entry name" value="Gprotein_alpha_S"/>
</dbReference>
<dbReference type="InterPro" id="IPR001019">
    <property type="entry name" value="Gprotein_alpha_su"/>
</dbReference>
<dbReference type="InterPro" id="IPR011025">
    <property type="entry name" value="GproteinA_insert"/>
</dbReference>
<dbReference type="InterPro" id="IPR027417">
    <property type="entry name" value="P-loop_NTPase"/>
</dbReference>
<dbReference type="PANTHER" id="PTHR10218">
    <property type="entry name" value="GTP-BINDING PROTEIN ALPHA SUBUNIT"/>
    <property type="match status" value="1"/>
</dbReference>
<dbReference type="PANTHER" id="PTHR10218:SF357">
    <property type="entry name" value="GUANINE NUCLEOTIDE-BINDING PROTEIN G(S) SUBUNIT ALPHA"/>
    <property type="match status" value="1"/>
</dbReference>
<dbReference type="Pfam" id="PF00503">
    <property type="entry name" value="G-alpha"/>
    <property type="match status" value="1"/>
</dbReference>
<dbReference type="PRINTS" id="PR00318">
    <property type="entry name" value="GPROTEINA"/>
</dbReference>
<dbReference type="PRINTS" id="PR00443">
    <property type="entry name" value="GPROTEINAS"/>
</dbReference>
<dbReference type="SMART" id="SM00275">
    <property type="entry name" value="G_alpha"/>
    <property type="match status" value="1"/>
</dbReference>
<dbReference type="SUPFAM" id="SSF52540">
    <property type="entry name" value="P-loop containing nucleoside triphosphate hydrolases"/>
    <property type="match status" value="1"/>
</dbReference>
<dbReference type="SUPFAM" id="SSF47895">
    <property type="entry name" value="Transducin (alpha subunit), insertion domain"/>
    <property type="match status" value="1"/>
</dbReference>
<dbReference type="PROSITE" id="PS51882">
    <property type="entry name" value="G_ALPHA"/>
    <property type="match status" value="1"/>
</dbReference>